<feature type="chain" id="PRO_0000283559" description="F-box protein At5g52880">
    <location>
        <begin position="1"/>
        <end position="269"/>
    </location>
</feature>
<feature type="domain" description="F-box" evidence="1">
    <location>
        <begin position="109"/>
        <end position="155"/>
    </location>
</feature>
<organism>
    <name type="scientific">Arabidopsis thaliana</name>
    <name type="common">Mouse-ear cress</name>
    <dbReference type="NCBI Taxonomy" id="3702"/>
    <lineage>
        <taxon>Eukaryota</taxon>
        <taxon>Viridiplantae</taxon>
        <taxon>Streptophyta</taxon>
        <taxon>Embryophyta</taxon>
        <taxon>Tracheophyta</taxon>
        <taxon>Spermatophyta</taxon>
        <taxon>Magnoliopsida</taxon>
        <taxon>eudicotyledons</taxon>
        <taxon>Gunneridae</taxon>
        <taxon>Pentapetalae</taxon>
        <taxon>rosids</taxon>
        <taxon>malvids</taxon>
        <taxon>Brassicales</taxon>
        <taxon>Brassicaceae</taxon>
        <taxon>Camelineae</taxon>
        <taxon>Arabidopsis</taxon>
    </lineage>
</organism>
<dbReference type="EMBL" id="AB009055">
    <property type="protein sequence ID" value="BAB10436.1"/>
    <property type="molecule type" value="Genomic_DNA"/>
</dbReference>
<dbReference type="EMBL" id="CP002688">
    <property type="protein sequence ID" value="AED96271.1"/>
    <property type="molecule type" value="Genomic_DNA"/>
</dbReference>
<dbReference type="EMBL" id="AY054282">
    <property type="protein sequence ID" value="AAL06941.1"/>
    <property type="molecule type" value="mRNA"/>
</dbReference>
<dbReference type="EMBL" id="AY132006">
    <property type="protein sequence ID" value="AAM91039.1"/>
    <property type="molecule type" value="mRNA"/>
</dbReference>
<dbReference type="RefSeq" id="NP_568779.1">
    <property type="nucleotide sequence ID" value="NM_124666.3"/>
</dbReference>
<dbReference type="SMR" id="Q9FLX3"/>
<dbReference type="BioGRID" id="20610">
    <property type="interactions" value="6"/>
</dbReference>
<dbReference type="FunCoup" id="Q9FLX3">
    <property type="interactions" value="1143"/>
</dbReference>
<dbReference type="IntAct" id="Q9FLX3">
    <property type="interactions" value="1"/>
</dbReference>
<dbReference type="STRING" id="3702.Q9FLX3"/>
<dbReference type="PaxDb" id="3702-AT5G52880.1"/>
<dbReference type="ProteomicsDB" id="222529"/>
<dbReference type="DNASU" id="835365"/>
<dbReference type="EnsemblPlants" id="AT5G52880.1">
    <property type="protein sequence ID" value="AT5G52880.1"/>
    <property type="gene ID" value="AT5G52880"/>
</dbReference>
<dbReference type="GeneID" id="835365"/>
<dbReference type="Gramene" id="AT5G52880.1">
    <property type="protein sequence ID" value="AT5G52880.1"/>
    <property type="gene ID" value="AT5G52880"/>
</dbReference>
<dbReference type="KEGG" id="ath:AT5G52880"/>
<dbReference type="Araport" id="AT5G52880"/>
<dbReference type="TAIR" id="AT5G52880"/>
<dbReference type="eggNOG" id="ENOG502QWBT">
    <property type="taxonomic scope" value="Eukaryota"/>
</dbReference>
<dbReference type="HOGENOM" id="CLU_060440_0_0_1"/>
<dbReference type="InParanoid" id="Q9FLX3"/>
<dbReference type="OMA" id="CDSIVWH"/>
<dbReference type="OrthoDB" id="10257471at2759"/>
<dbReference type="PhylomeDB" id="Q9FLX3"/>
<dbReference type="PRO" id="PR:Q9FLX3"/>
<dbReference type="Proteomes" id="UP000006548">
    <property type="component" value="Chromosome 5"/>
</dbReference>
<dbReference type="ExpressionAtlas" id="Q9FLX3">
    <property type="expression patterns" value="baseline and differential"/>
</dbReference>
<dbReference type="GO" id="GO:0005737">
    <property type="term" value="C:cytoplasm"/>
    <property type="evidence" value="ECO:0000314"/>
    <property type="project" value="TAIR"/>
</dbReference>
<dbReference type="Gene3D" id="1.20.1280.50">
    <property type="match status" value="1"/>
</dbReference>
<dbReference type="InterPro" id="IPR057039">
    <property type="entry name" value="At5g52880_ARM"/>
</dbReference>
<dbReference type="InterPro" id="IPR036047">
    <property type="entry name" value="F-box-like_dom_sf"/>
</dbReference>
<dbReference type="InterPro" id="IPR001810">
    <property type="entry name" value="F-box_dom"/>
</dbReference>
<dbReference type="PANTHER" id="PTHR47744">
    <property type="entry name" value="OS05G0526300 PROTEIN"/>
    <property type="match status" value="1"/>
</dbReference>
<dbReference type="PANTHER" id="PTHR47744:SF1">
    <property type="entry name" value="OS05G0526300 PROTEIN"/>
    <property type="match status" value="1"/>
</dbReference>
<dbReference type="Pfam" id="PF24104">
    <property type="entry name" value="At5g52880_ARM"/>
    <property type="match status" value="1"/>
</dbReference>
<dbReference type="Pfam" id="PF12937">
    <property type="entry name" value="F-box-like"/>
    <property type="match status" value="1"/>
</dbReference>
<dbReference type="SMART" id="SM00256">
    <property type="entry name" value="FBOX"/>
    <property type="match status" value="1"/>
</dbReference>
<dbReference type="SUPFAM" id="SSF81383">
    <property type="entry name" value="F-box domain"/>
    <property type="match status" value="1"/>
</dbReference>
<dbReference type="PROSITE" id="PS50181">
    <property type="entry name" value="FBOX"/>
    <property type="match status" value="1"/>
</dbReference>
<gene>
    <name type="ordered locus">At5g52880</name>
    <name type="ORF">MXC20.10</name>
</gene>
<keyword id="KW-1185">Reference proteome</keyword>
<proteinExistence type="evidence at transcript level"/>
<evidence type="ECO:0000255" key="1">
    <source>
        <dbReference type="PROSITE-ProRule" id="PRU00080"/>
    </source>
</evidence>
<accession>Q9FLX3</accession>
<reference key="1">
    <citation type="journal article" date="1998" name="DNA Res.">
        <title>Structural analysis of Arabidopsis thaliana chromosome 5. IV. Sequence features of the regions of 1,456,315 bp covered by nineteen physically assigned P1 and TAC clones.</title>
        <authorList>
            <person name="Sato S."/>
            <person name="Kaneko T."/>
            <person name="Kotani H."/>
            <person name="Nakamura Y."/>
            <person name="Asamizu E."/>
            <person name="Miyajima N."/>
            <person name="Tabata S."/>
        </authorList>
    </citation>
    <scope>NUCLEOTIDE SEQUENCE [LARGE SCALE GENOMIC DNA]</scope>
    <source>
        <strain>cv. Columbia</strain>
    </source>
</reference>
<reference key="2">
    <citation type="journal article" date="2017" name="Plant J.">
        <title>Araport11: a complete reannotation of the Arabidopsis thaliana reference genome.</title>
        <authorList>
            <person name="Cheng C.Y."/>
            <person name="Krishnakumar V."/>
            <person name="Chan A.P."/>
            <person name="Thibaud-Nissen F."/>
            <person name="Schobel S."/>
            <person name="Town C.D."/>
        </authorList>
    </citation>
    <scope>GENOME REANNOTATION</scope>
    <source>
        <strain>cv. Columbia</strain>
    </source>
</reference>
<reference key="3">
    <citation type="journal article" date="2003" name="Science">
        <title>Empirical analysis of transcriptional activity in the Arabidopsis genome.</title>
        <authorList>
            <person name="Yamada K."/>
            <person name="Lim J."/>
            <person name="Dale J.M."/>
            <person name="Chen H."/>
            <person name="Shinn P."/>
            <person name="Palm C.J."/>
            <person name="Southwick A.M."/>
            <person name="Wu H.C."/>
            <person name="Kim C.J."/>
            <person name="Nguyen M."/>
            <person name="Pham P.K."/>
            <person name="Cheuk R.F."/>
            <person name="Karlin-Newmann G."/>
            <person name="Liu S.X."/>
            <person name="Lam B."/>
            <person name="Sakano H."/>
            <person name="Wu T."/>
            <person name="Yu G."/>
            <person name="Miranda M."/>
            <person name="Quach H.L."/>
            <person name="Tripp M."/>
            <person name="Chang C.H."/>
            <person name="Lee J.M."/>
            <person name="Toriumi M.J."/>
            <person name="Chan M.M."/>
            <person name="Tang C.C."/>
            <person name="Onodera C.S."/>
            <person name="Deng J.M."/>
            <person name="Akiyama K."/>
            <person name="Ansari Y."/>
            <person name="Arakawa T."/>
            <person name="Banh J."/>
            <person name="Banno F."/>
            <person name="Bowser L."/>
            <person name="Brooks S.Y."/>
            <person name="Carninci P."/>
            <person name="Chao Q."/>
            <person name="Choy N."/>
            <person name="Enju A."/>
            <person name="Goldsmith A.D."/>
            <person name="Gurjal M."/>
            <person name="Hansen N.F."/>
            <person name="Hayashizaki Y."/>
            <person name="Johnson-Hopson C."/>
            <person name="Hsuan V.W."/>
            <person name="Iida K."/>
            <person name="Karnes M."/>
            <person name="Khan S."/>
            <person name="Koesema E."/>
            <person name="Ishida J."/>
            <person name="Jiang P.X."/>
            <person name="Jones T."/>
            <person name="Kawai J."/>
            <person name="Kamiya A."/>
            <person name="Meyers C."/>
            <person name="Nakajima M."/>
            <person name="Narusaka M."/>
            <person name="Seki M."/>
            <person name="Sakurai T."/>
            <person name="Satou M."/>
            <person name="Tamse R."/>
            <person name="Vaysberg M."/>
            <person name="Wallender E.K."/>
            <person name="Wong C."/>
            <person name="Yamamura Y."/>
            <person name="Yuan S."/>
            <person name="Shinozaki K."/>
            <person name="Davis R.W."/>
            <person name="Theologis A."/>
            <person name="Ecker J.R."/>
        </authorList>
    </citation>
    <scope>NUCLEOTIDE SEQUENCE [LARGE SCALE MRNA]</scope>
    <source>
        <strain>cv. Columbia</strain>
    </source>
</reference>
<name>FB293_ARATH</name>
<protein>
    <recommendedName>
        <fullName>F-box protein At5g52880</fullName>
    </recommendedName>
</protein>
<sequence length="269" mass="30704">MKRYQNLKVGEAFSKNRIYPFACNELSSILNLAYSLSPKNVKALIFQDTLSAFRLLPDINTSAAVSAANLLLKSVEAVLPKQKKNLAIVEFKQAKVALKRRSKNREEEDIDIPSLPQDILIHIFSFLEISSLVSSAQVSRSWNQATHENSLWQSQFDLHFNHKVLIRMQSDIDWREAFKKAYIAANSSEALRSGRGYCSYCDSIVWHENLRCLNKQCRLKSGNKPLDLITTHQVVNYLLGIESSDDESESDDEAFPGRLWKLSYVPDYL</sequence>